<organism>
    <name type="scientific">Spodoptera frugiperda</name>
    <name type="common">Fall armyworm</name>
    <dbReference type="NCBI Taxonomy" id="7108"/>
    <lineage>
        <taxon>Eukaryota</taxon>
        <taxon>Metazoa</taxon>
        <taxon>Ecdysozoa</taxon>
        <taxon>Arthropoda</taxon>
        <taxon>Hexapoda</taxon>
        <taxon>Insecta</taxon>
        <taxon>Pterygota</taxon>
        <taxon>Neoptera</taxon>
        <taxon>Endopterygota</taxon>
        <taxon>Lepidoptera</taxon>
        <taxon>Glossata</taxon>
        <taxon>Ditrysia</taxon>
        <taxon>Noctuoidea</taxon>
        <taxon>Noctuidae</taxon>
        <taxon>Amphipyrinae</taxon>
        <taxon>Spodoptera</taxon>
    </lineage>
</organism>
<sequence length="190" mass="21939">MSTKIIKASAAEPDVFETSISQALVELETNSDLKAQLRELYITKAKEIELHNKKSIIIYVPMPKLKAFQKIQIRLVRELEKKFSGKHVVFIGDRKILPKPSHKTRVANKQKRPRSRTLTSVYDAILEDLVFPAEIVGKRIRIKLDGSQLIKVHLDKNQQTTIEHKVDTFQSVYKKLTGREVTFEFPEPYL</sequence>
<keyword id="KW-0963">Cytoplasm</keyword>
<keyword id="KW-0206">Cytoskeleton</keyword>
<keyword id="KW-0539">Nucleus</keyword>
<keyword id="KW-0687">Ribonucleoprotein</keyword>
<keyword id="KW-0689">Ribosomal protein</keyword>
<feature type="chain" id="PRO_0000174203" description="Small ribosomal subunit protein eS7">
    <location>
        <begin position="1"/>
        <end position="190"/>
    </location>
</feature>
<proteinExistence type="evidence at transcript level"/>
<gene>
    <name type="primary">RpS7</name>
</gene>
<name>RS7_SPOFR</name>
<protein>
    <recommendedName>
        <fullName evidence="3">Small ribosomal subunit protein eS7</fullName>
    </recommendedName>
    <alternativeName>
        <fullName>40S ribosomal protein S7</fullName>
    </alternativeName>
</protein>
<reference key="1">
    <citation type="journal article" date="2003" name="Bioinformatics">
        <title>Annotation pattern of ESTs from Spodoptera frugiperda Sf9 cells and analysis of the ribosomal protein genes reveal insect-specific features and unexpectedly low codon usage bias.</title>
        <authorList>
            <person name="Landais I."/>
            <person name="Ogliastro M."/>
            <person name="Mita K."/>
            <person name="Nohata J."/>
            <person name="Lopez-Ferber M."/>
            <person name="Duonor-Cerutti M."/>
            <person name="Shimada T."/>
            <person name="Fournier P."/>
            <person name="Devauchelle G."/>
        </authorList>
    </citation>
    <scope>NUCLEOTIDE SEQUENCE [LARGE SCALE MRNA]</scope>
</reference>
<accession>Q962S0</accession>
<comment type="function">
    <text evidence="1 2">Component of the small ribosomal subunit. The ribosome is a large ribonucleoprotein complex responsible for the synthesis of proteins in the cell (By similarity). Required for rRNA maturation (By similarity). Part of the small subunit (SSU) processome, first precursor of the small eukaryotic ribosomal subunit. During the assembly of the SSU processome in the nucleolus, many ribosome biogenesis factors, an RNA chaperone and ribosomal proteins associate with the nascent pre-rRNA and work in concert to generate RNA folding, modifications, rearrangements and cleavage as well as targeted degradation of pre-ribosomal RNA by the RNA exosome (By similarity).</text>
</comment>
<comment type="subunit">
    <text evidence="1 2">Component of the small ribosomal subunit (By similarity). Part of the small subunit (SSU) processome, composed of more than 70 proteins and the RNA chaperone small nucleolar RNA (snoRNA) U3 (By similarity).</text>
</comment>
<comment type="subcellular location">
    <subcellularLocation>
        <location evidence="1">Cytoplasm</location>
        <location evidence="1">Cytoskeleton</location>
        <location evidence="1">Microtubule organizing center</location>
        <location evidence="1">Centrosome</location>
    </subcellularLocation>
    <subcellularLocation>
        <location evidence="1">Cytoplasm</location>
    </subcellularLocation>
    <subcellularLocation>
        <location evidence="1">Nucleus</location>
        <location evidence="1">Nucleolus</location>
    </subcellularLocation>
</comment>
<comment type="similarity">
    <text evidence="3">Belongs to the eukaryotic ribosomal protein eS7 family.</text>
</comment>
<evidence type="ECO:0000250" key="1">
    <source>
        <dbReference type="UniProtKB" id="P62081"/>
    </source>
</evidence>
<evidence type="ECO:0000250" key="2">
    <source>
        <dbReference type="UniProtKB" id="P62082"/>
    </source>
</evidence>
<evidence type="ECO:0000305" key="3"/>
<dbReference type="EMBL" id="AF400206">
    <property type="protein sequence ID" value="AAK92178.1"/>
    <property type="molecule type" value="mRNA"/>
</dbReference>
<dbReference type="SMR" id="Q962S0"/>
<dbReference type="EnsemblMetazoa" id="XM_035596350.2">
    <property type="protein sequence ID" value="XP_035452243.1"/>
    <property type="gene ID" value="LOC118277521"/>
</dbReference>
<dbReference type="EnsemblMetazoa" id="XM_035596351.2">
    <property type="protein sequence ID" value="XP_035452244.1"/>
    <property type="gene ID" value="LOC118277521"/>
</dbReference>
<dbReference type="EnsemblMetazoa" id="XM_035596352.2">
    <property type="protein sequence ID" value="XP_035452245.1"/>
    <property type="gene ID" value="LOC118277521"/>
</dbReference>
<dbReference type="EnsemblMetazoa" id="XM_050696656.1">
    <property type="protein sequence ID" value="XP_050552613.1"/>
    <property type="gene ID" value="LOC118277521"/>
</dbReference>
<dbReference type="EnsemblMetazoa" id="XM_050696657.1">
    <property type="protein sequence ID" value="XP_050552614.1"/>
    <property type="gene ID" value="LOC118277521"/>
</dbReference>
<dbReference type="OrthoDB" id="1724687at2759"/>
<dbReference type="Proteomes" id="UP000829999">
    <property type="component" value="Unplaced"/>
</dbReference>
<dbReference type="GO" id="GO:0030686">
    <property type="term" value="C:90S preribosome"/>
    <property type="evidence" value="ECO:0007669"/>
    <property type="project" value="TreeGrafter"/>
</dbReference>
<dbReference type="GO" id="GO:0005813">
    <property type="term" value="C:centrosome"/>
    <property type="evidence" value="ECO:0007669"/>
    <property type="project" value="UniProtKB-SubCell"/>
</dbReference>
<dbReference type="GO" id="GO:0022627">
    <property type="term" value="C:cytosolic small ribosomal subunit"/>
    <property type="evidence" value="ECO:0007669"/>
    <property type="project" value="TreeGrafter"/>
</dbReference>
<dbReference type="GO" id="GO:0005730">
    <property type="term" value="C:nucleolus"/>
    <property type="evidence" value="ECO:0007669"/>
    <property type="project" value="UniProtKB-SubCell"/>
</dbReference>
<dbReference type="GO" id="GO:0032040">
    <property type="term" value="C:small-subunit processome"/>
    <property type="evidence" value="ECO:0000250"/>
    <property type="project" value="UniProtKB"/>
</dbReference>
<dbReference type="GO" id="GO:0003735">
    <property type="term" value="F:structural constituent of ribosome"/>
    <property type="evidence" value="ECO:0007669"/>
    <property type="project" value="InterPro"/>
</dbReference>
<dbReference type="GO" id="GO:0042274">
    <property type="term" value="P:ribosomal small subunit biogenesis"/>
    <property type="evidence" value="ECO:0000250"/>
    <property type="project" value="UniProtKB"/>
</dbReference>
<dbReference type="GO" id="GO:0006364">
    <property type="term" value="P:rRNA processing"/>
    <property type="evidence" value="ECO:0007669"/>
    <property type="project" value="TreeGrafter"/>
</dbReference>
<dbReference type="GO" id="GO:0006412">
    <property type="term" value="P:translation"/>
    <property type="evidence" value="ECO:0007669"/>
    <property type="project" value="InterPro"/>
</dbReference>
<dbReference type="InterPro" id="IPR000554">
    <property type="entry name" value="Ribosomal_eS7"/>
</dbReference>
<dbReference type="InterPro" id="IPR047861">
    <property type="entry name" value="Ribosomal_eS7_CS"/>
</dbReference>
<dbReference type="PANTHER" id="PTHR11278">
    <property type="entry name" value="40S RIBOSOMAL PROTEIN S7"/>
    <property type="match status" value="1"/>
</dbReference>
<dbReference type="PANTHER" id="PTHR11278:SF0">
    <property type="entry name" value="SMALL RIBOSOMAL SUBUNIT PROTEIN ES7"/>
    <property type="match status" value="1"/>
</dbReference>
<dbReference type="Pfam" id="PF01251">
    <property type="entry name" value="Ribosomal_S7e"/>
    <property type="match status" value="1"/>
</dbReference>
<dbReference type="PROSITE" id="PS00948">
    <property type="entry name" value="RIBOSOMAL_S7E"/>
    <property type="match status" value="1"/>
</dbReference>